<keyword id="KW-1003">Cell membrane</keyword>
<keyword id="KW-0297">G-protein coupled receptor</keyword>
<keyword id="KW-0325">Glycoprotein</keyword>
<keyword id="KW-0449">Lipoprotein</keyword>
<keyword id="KW-0472">Membrane</keyword>
<keyword id="KW-0564">Palmitate</keyword>
<keyword id="KW-0597">Phosphoprotein</keyword>
<keyword id="KW-0675">Receptor</keyword>
<keyword id="KW-1185">Reference proteome</keyword>
<keyword id="KW-0807">Transducer</keyword>
<keyword id="KW-0812">Transmembrane</keyword>
<keyword id="KW-1133">Transmembrane helix</keyword>
<feature type="chain" id="PRO_0000069528" description="G-protein coupled receptor 12">
    <location>
        <begin position="1"/>
        <end position="334"/>
    </location>
</feature>
<feature type="topological domain" description="Extracellular" evidence="2">
    <location>
        <begin position="1"/>
        <end position="48"/>
    </location>
</feature>
<feature type="transmembrane region" description="Helical; Name=1" evidence="2">
    <location>
        <begin position="49"/>
        <end position="69"/>
    </location>
</feature>
<feature type="topological domain" description="Cytoplasmic" evidence="2">
    <location>
        <begin position="70"/>
        <end position="78"/>
    </location>
</feature>
<feature type="transmembrane region" description="Helical; Name=2" evidence="2">
    <location>
        <begin position="79"/>
        <end position="99"/>
    </location>
</feature>
<feature type="topological domain" description="Extracellular" evidence="2">
    <location>
        <begin position="100"/>
        <end position="113"/>
    </location>
</feature>
<feature type="transmembrane region" description="Helical; Name=3" evidence="2">
    <location>
        <begin position="114"/>
        <end position="134"/>
    </location>
</feature>
<feature type="topological domain" description="Cytoplasmic" evidence="2">
    <location>
        <begin position="135"/>
        <end position="158"/>
    </location>
</feature>
<feature type="transmembrane region" description="Helical; Name=4" evidence="2">
    <location>
        <begin position="159"/>
        <end position="179"/>
    </location>
</feature>
<feature type="topological domain" description="Extracellular" evidence="2">
    <location>
        <begin position="180"/>
        <end position="199"/>
    </location>
</feature>
<feature type="transmembrane region" description="Helical; Name=5" evidence="2">
    <location>
        <begin position="200"/>
        <end position="220"/>
    </location>
</feature>
<feature type="topological domain" description="Cytoplasmic" evidence="2">
    <location>
        <begin position="221"/>
        <end position="252"/>
    </location>
</feature>
<feature type="transmembrane region" description="Helical; Name=6" evidence="2">
    <location>
        <begin position="253"/>
        <end position="273"/>
    </location>
</feature>
<feature type="topological domain" description="Extracellular" evidence="2">
    <location>
        <begin position="274"/>
        <end position="282"/>
    </location>
</feature>
<feature type="transmembrane region" description="Helical; Name=7" evidence="2">
    <location>
        <begin position="283"/>
        <end position="303"/>
    </location>
</feature>
<feature type="topological domain" description="Cytoplasmic" evidence="2">
    <location>
        <begin position="304"/>
        <end position="334"/>
    </location>
</feature>
<feature type="modified residue" description="Phosphoserine" evidence="2">
    <location>
        <position position="330"/>
    </location>
</feature>
<feature type="modified residue" description="Phosphoserine" evidence="2">
    <location>
        <position position="332"/>
    </location>
</feature>
<feature type="lipid moiety-binding region" description="S-palmitoyl cysteine" evidence="1">
    <location>
        <position position="317"/>
    </location>
</feature>
<feature type="glycosylation site" description="N-linked (GlcNAc...) asparagine" evidence="2">
    <location>
        <position position="8"/>
    </location>
</feature>
<feature type="glycosylation site" description="N-linked (GlcNAc...) asparagine" evidence="2">
    <location>
        <position position="24"/>
    </location>
</feature>
<name>GPR12_MOUSE</name>
<reference key="1">
    <citation type="journal article" date="1993" name="FEBS Lett.">
        <title>Molecular cloning of a novel putative G protein-coupled receptor (GPCR21) which is expressed predominantly in mouse central nervous system.</title>
        <authorList>
            <person name="Saeki Y."/>
            <person name="Ueno S."/>
            <person name="Mizuno R."/>
            <person name="Nishimura T."/>
            <person name="Fujimura H."/>
            <person name="Nagai Y."/>
            <person name="Yanagihara T."/>
        </authorList>
    </citation>
    <scope>NUCLEOTIDE SEQUENCE [MRNA]</scope>
    <source>
        <strain>BALB/cJ</strain>
        <tissue>Brain</tissue>
    </source>
</reference>
<reference key="2">
    <citation type="journal article" date="2004" name="Genome Res.">
        <title>The status, quality, and expansion of the NIH full-length cDNA project: the Mammalian Gene Collection (MGC).</title>
        <authorList>
            <consortium name="The MGC Project Team"/>
        </authorList>
    </citation>
    <scope>NUCLEOTIDE SEQUENCE [LARGE SCALE MRNA]</scope>
    <source>
        <strain>C57BL/6J</strain>
        <tissue>Brain</tissue>
    </source>
</reference>
<reference key="3">
    <citation type="journal article" date="2003" name="J. Neurosci.">
        <title>Role of the G-protein-coupled receptor GPR12 as high-affinity receptor for sphingosylphosphorylcholine and its expression and function in brain development.</title>
        <authorList>
            <person name="Ignatov A."/>
            <person name="Lintzel J."/>
            <person name="Hermans-Borgmeyer I."/>
            <person name="Kreienkamp H.J."/>
            <person name="Joost P."/>
            <person name="Thomsen S."/>
            <person name="Methner A."/>
            <person name="Schaller H.C."/>
        </authorList>
    </citation>
    <scope>PRELIMINARY FUNCTION</scope>
</reference>
<gene>
    <name type="primary">Gpr12</name>
    <name type="synonym">Gpcr12</name>
</gene>
<accession>P35412</accession>
<dbReference type="EMBL" id="D21061">
    <property type="protein sequence ID" value="BAA04640.1"/>
    <property type="molecule type" value="mRNA"/>
</dbReference>
<dbReference type="EMBL" id="BC055746">
    <property type="protein sequence ID" value="AAH55746.1"/>
    <property type="molecule type" value="mRNA"/>
</dbReference>
<dbReference type="CCDS" id="CCDS19871.1"/>
<dbReference type="RefSeq" id="NP_001010941.1">
    <property type="nucleotide sequence ID" value="NM_001010941.2"/>
</dbReference>
<dbReference type="RefSeq" id="NP_001345984.1">
    <property type="nucleotide sequence ID" value="NM_001359055.1"/>
</dbReference>
<dbReference type="RefSeq" id="NP_001345985.1">
    <property type="nucleotide sequence ID" value="NM_001359056.1"/>
</dbReference>
<dbReference type="RefSeq" id="NP_001345986.1">
    <property type="nucleotide sequence ID" value="NM_001359057.1"/>
</dbReference>
<dbReference type="RefSeq" id="NP_032177.1">
    <property type="nucleotide sequence ID" value="NM_008151.3"/>
</dbReference>
<dbReference type="RefSeq" id="XP_006504869.1">
    <property type="nucleotide sequence ID" value="XM_006504806.3"/>
</dbReference>
<dbReference type="RefSeq" id="XP_011239304.1">
    <property type="nucleotide sequence ID" value="XM_011241002.2"/>
</dbReference>
<dbReference type="RefSeq" id="XP_030109993.1">
    <property type="nucleotide sequence ID" value="XM_030254133.2"/>
</dbReference>
<dbReference type="SMR" id="P35412"/>
<dbReference type="FunCoup" id="P35412">
    <property type="interactions" value="220"/>
</dbReference>
<dbReference type="STRING" id="10090.ENSMUSP00000038245"/>
<dbReference type="GlyCosmos" id="P35412">
    <property type="glycosylation" value="2 sites, No reported glycans"/>
</dbReference>
<dbReference type="GlyGen" id="P35412">
    <property type="glycosylation" value="2 sites, 1 N-linked glycan (1 site)"/>
</dbReference>
<dbReference type="PhosphoSitePlus" id="P35412"/>
<dbReference type="PaxDb" id="10090-ENSMUSP00000038245"/>
<dbReference type="ProteomicsDB" id="271355"/>
<dbReference type="Antibodypedia" id="7292">
    <property type="antibodies" value="286 antibodies from 31 providers"/>
</dbReference>
<dbReference type="DNASU" id="14738"/>
<dbReference type="Ensembl" id="ENSMUST00000036211.8">
    <property type="protein sequence ID" value="ENSMUSP00000038245.7"/>
    <property type="gene ID" value="ENSMUSG00000041468.8"/>
</dbReference>
<dbReference type="Ensembl" id="ENSMUST00000197431.2">
    <property type="protein sequence ID" value="ENSMUSP00000142889.2"/>
    <property type="gene ID" value="ENSMUSG00000041468.8"/>
</dbReference>
<dbReference type="GeneID" id="14738"/>
<dbReference type="KEGG" id="mmu:14738"/>
<dbReference type="UCSC" id="uc009ani.1">
    <property type="organism name" value="mouse"/>
</dbReference>
<dbReference type="AGR" id="MGI:101909"/>
<dbReference type="CTD" id="2835"/>
<dbReference type="MGI" id="MGI:101909">
    <property type="gene designation" value="Gpr12"/>
</dbReference>
<dbReference type="VEuPathDB" id="HostDB:ENSMUSG00000041468"/>
<dbReference type="eggNOG" id="KOG3656">
    <property type="taxonomic scope" value="Eukaryota"/>
</dbReference>
<dbReference type="GeneTree" id="ENSGT01110000267224"/>
<dbReference type="HOGENOM" id="CLU_065071_0_0_1"/>
<dbReference type="InParanoid" id="P35412"/>
<dbReference type="OMA" id="ELIVNPW"/>
<dbReference type="OrthoDB" id="10042731at2759"/>
<dbReference type="PhylomeDB" id="P35412"/>
<dbReference type="TreeFam" id="TF330052"/>
<dbReference type="BioGRID-ORCS" id="14738">
    <property type="hits" value="1 hit in 77 CRISPR screens"/>
</dbReference>
<dbReference type="ChiTaRS" id="Gpr12">
    <property type="organism name" value="mouse"/>
</dbReference>
<dbReference type="PRO" id="PR:P35412"/>
<dbReference type="Proteomes" id="UP000000589">
    <property type="component" value="Chromosome 5"/>
</dbReference>
<dbReference type="RNAct" id="P35412">
    <property type="molecule type" value="protein"/>
</dbReference>
<dbReference type="Bgee" id="ENSMUSG00000041468">
    <property type="expression patterns" value="Expressed in perirhinal cortex and 60 other cell types or tissues"/>
</dbReference>
<dbReference type="ExpressionAtlas" id="P35412">
    <property type="expression patterns" value="baseline and differential"/>
</dbReference>
<dbReference type="GO" id="GO:0005886">
    <property type="term" value="C:plasma membrane"/>
    <property type="evidence" value="ECO:0007669"/>
    <property type="project" value="UniProtKB-SubCell"/>
</dbReference>
<dbReference type="GO" id="GO:0004930">
    <property type="term" value="F:G protein-coupled receptor activity"/>
    <property type="evidence" value="ECO:0007669"/>
    <property type="project" value="UniProtKB-KW"/>
</dbReference>
<dbReference type="GO" id="GO:0031210">
    <property type="term" value="F:phosphatidylcholine binding"/>
    <property type="evidence" value="ECO:0000314"/>
    <property type="project" value="MGI"/>
</dbReference>
<dbReference type="GO" id="GO:0007186">
    <property type="term" value="P:G protein-coupled receptor signaling pathway"/>
    <property type="evidence" value="ECO:0000314"/>
    <property type="project" value="MGI"/>
</dbReference>
<dbReference type="GO" id="GO:0006874">
    <property type="term" value="P:intracellular calcium ion homeostasis"/>
    <property type="evidence" value="ECO:0000314"/>
    <property type="project" value="MGI"/>
</dbReference>
<dbReference type="CDD" id="cd15961">
    <property type="entry name" value="7tmA_GPR12"/>
    <property type="match status" value="1"/>
</dbReference>
<dbReference type="FunFam" id="1.20.1070.10:FF:000067">
    <property type="entry name" value="G-protein coupled receptor 12"/>
    <property type="match status" value="1"/>
</dbReference>
<dbReference type="Gene3D" id="1.20.1070.10">
    <property type="entry name" value="Rhodopsin 7-helix transmembrane proteins"/>
    <property type="match status" value="1"/>
</dbReference>
<dbReference type="InterPro" id="IPR000276">
    <property type="entry name" value="GPCR_Rhodpsn"/>
</dbReference>
<dbReference type="InterPro" id="IPR017452">
    <property type="entry name" value="GPCR_Rhodpsn_7TM"/>
</dbReference>
<dbReference type="InterPro" id="IPR000599">
    <property type="entry name" value="GPR12"/>
</dbReference>
<dbReference type="InterPro" id="IPR000723">
    <property type="entry name" value="GPR_3/6/12_orphan"/>
</dbReference>
<dbReference type="PANTHER" id="PTHR22750">
    <property type="entry name" value="G-PROTEIN COUPLED RECEPTOR"/>
    <property type="match status" value="1"/>
</dbReference>
<dbReference type="Pfam" id="PF00001">
    <property type="entry name" value="7tm_1"/>
    <property type="match status" value="1"/>
</dbReference>
<dbReference type="PRINTS" id="PR00237">
    <property type="entry name" value="GPCRRHODOPSN"/>
</dbReference>
<dbReference type="PRINTS" id="PR00650">
    <property type="entry name" value="GPR12ORPHANR"/>
</dbReference>
<dbReference type="PRINTS" id="PR00644">
    <property type="entry name" value="GPRORPHANR"/>
</dbReference>
<dbReference type="SMART" id="SM01381">
    <property type="entry name" value="7TM_GPCR_Srsx"/>
    <property type="match status" value="1"/>
</dbReference>
<dbReference type="SUPFAM" id="SSF81321">
    <property type="entry name" value="Family A G protein-coupled receptor-like"/>
    <property type="match status" value="1"/>
</dbReference>
<dbReference type="PROSITE" id="PS00237">
    <property type="entry name" value="G_PROTEIN_RECEP_F1_1"/>
    <property type="match status" value="1"/>
</dbReference>
<dbReference type="PROSITE" id="PS50262">
    <property type="entry name" value="G_PROTEIN_RECEP_F1_2"/>
    <property type="match status" value="1"/>
</dbReference>
<protein>
    <recommendedName>
        <fullName>G-protein coupled receptor 12</fullName>
    </recommendedName>
    <alternativeName>
        <fullName>GPCR01</fullName>
    </alternativeName>
</protein>
<proteinExistence type="evidence at transcript level"/>
<comment type="function">
    <text evidence="1">Receptor with constitutive G(s) signaling activity that stimulates cyclic AMP production (By similarity). Promotes neurite outgrowth and blocks myelin inhibition in neurons.</text>
</comment>
<comment type="subcellular location">
    <subcellularLocation>
        <location evidence="4">Cell membrane</location>
        <topology evidence="4">Multi-pass membrane protein</topology>
    </subcellularLocation>
</comment>
<comment type="tissue specificity">
    <text>Expressed predominantly in the forebrain and a lesser extent in the hindbrain. Lower expression in the liver.</text>
</comment>
<comment type="similarity">
    <text evidence="3">Belongs to the G-protein coupled receptor 1 family.</text>
</comment>
<comment type="caution">
    <text evidence="5">Was originally thought to be a receptor for sphingosine 1-phosphate.</text>
</comment>
<organism>
    <name type="scientific">Mus musculus</name>
    <name type="common">Mouse</name>
    <dbReference type="NCBI Taxonomy" id="10090"/>
    <lineage>
        <taxon>Eukaryota</taxon>
        <taxon>Metazoa</taxon>
        <taxon>Chordata</taxon>
        <taxon>Craniata</taxon>
        <taxon>Vertebrata</taxon>
        <taxon>Euteleostomi</taxon>
        <taxon>Mammalia</taxon>
        <taxon>Eutheria</taxon>
        <taxon>Euarchontoglires</taxon>
        <taxon>Glires</taxon>
        <taxon>Rodentia</taxon>
        <taxon>Myomorpha</taxon>
        <taxon>Muroidea</taxon>
        <taxon>Muridae</taxon>
        <taxon>Murinae</taxon>
        <taxon>Mus</taxon>
        <taxon>Mus</taxon>
    </lineage>
</organism>
<sequence length="334" mass="36589">MNEDPKVNLSGLPRDCIDAGAPENISAAVPSQGSVAESEPELVVNPWDIVLCSSGTLICCENAVVVLIIFHSPSLRAPMFLLIGSLALADLLAGLGLIINFVFAYLLQSEATKLVTIGLIVASFSASVCSLLAITVDRYLSLYYALTYHSERTVTFTYVMLVMLWGTSICLGLLPVMGWNCLRDESTCSVVRPLTKNNAAILSISFLFMFALMLQLYIQICKIVMRHAHQIALQHHFLATSHYVTTRKGVSTLALILGTFAACWMPFTLYSLIADYTYPSIYTYATLLPATYNSIINPVIYAFRNQEIQKALCLICCGCIPSSLSQRARSPSDV</sequence>
<evidence type="ECO:0000250" key="1"/>
<evidence type="ECO:0000255" key="2"/>
<evidence type="ECO:0000255" key="3">
    <source>
        <dbReference type="PROSITE-ProRule" id="PRU00521"/>
    </source>
</evidence>
<evidence type="ECO:0000305" key="4"/>
<evidence type="ECO:0000305" key="5">
    <source>
    </source>
</evidence>